<reference key="1">
    <citation type="journal article" date="2000" name="Development">
        <title>Combinatorial RNA interference indicates GLH-4 can compensate for GLH-1; these two P granule components are critical for fertility in C. elegans.</title>
        <authorList>
            <person name="Kuznicki K.A."/>
            <person name="Smith P.A."/>
            <person name="Leung-Chiu W.M."/>
            <person name="Estevez A.O."/>
            <person name="Scott H.C."/>
            <person name="Bennett K.L."/>
        </authorList>
    </citation>
    <scope>NUCLEOTIDE SEQUENCE [MRNA]</scope>
    <source>
        <strain>Bristol N2</strain>
    </source>
</reference>
<reference key="2">
    <citation type="journal article" date="1998" name="Science">
        <title>Genome sequence of the nematode C. elegans: a platform for investigating biology.</title>
        <authorList>
            <consortium name="The C. elegans sequencing consortium"/>
        </authorList>
    </citation>
    <scope>NUCLEOTIDE SEQUENCE [LARGE SCALE GENOMIC DNA]</scope>
    <source>
        <strain>Bristol N2</strain>
    </source>
</reference>
<reference key="3">
    <citation type="journal article" date="2002" name="Dev. Biol.">
        <title>The GLH proteins, Caenorhabditis elegans P granule components, associate with CSN-5 and KGB-1, proteins necessary for fertility, and with ZYX-1, a predicted cytoskeletal protein.</title>
        <authorList>
            <person name="Smith P."/>
            <person name="Leung-Chiu W.-M."/>
            <person name="Montgomery R."/>
            <person name="Orsborn A."/>
            <person name="Kuznicki K."/>
            <person name="Gressman-Coberly E."/>
            <person name="Mutapcic L."/>
            <person name="Bennett K."/>
        </authorList>
    </citation>
    <scope>INTERACTION WITH KGB-1</scope>
</reference>
<reference key="4">
    <citation type="journal article" date="2011" name="J. Cell Biol.">
        <title>PGL proteins self associate and bind RNPs to mediate germ granule assembly in C. elegans.</title>
        <authorList>
            <person name="Hanazawa M."/>
            <person name="Yonetani M."/>
            <person name="Sugimoto A."/>
        </authorList>
    </citation>
    <scope>FUNCTION</scope>
    <scope>DISRUPTION PHENOTYPE</scope>
</reference>
<reference key="5">
    <citation type="journal article" date="2014" name="Curr. Biol.">
        <title>Germ-granule components prevent somatic development in the C. elegans germline.</title>
        <authorList>
            <person name="Updike D.L."/>
            <person name="Knutson A.K."/>
            <person name="Egelhofer T.A."/>
            <person name="Campbell A.C."/>
            <person name="Strome S."/>
        </authorList>
    </citation>
    <scope>FUNCTION</scope>
    <scope>DISRUPTION PHENOTYPE</scope>
</reference>
<reference key="6">
    <citation type="journal article" date="2016" name="Sci. Rep.">
        <title>Somatically expressed germ-granule components, PGL-1 and PGL-3, repress programmed cell death in C. elegans.</title>
        <authorList>
            <person name="Al-Amin M."/>
            <person name="Min H."/>
            <person name="Shim Y.H."/>
            <person name="Kawasaki I."/>
        </authorList>
    </citation>
    <scope>FUNCTION</scope>
    <scope>DISRUPTION PHENOTYPE</scope>
</reference>
<organism>
    <name type="scientific">Caenorhabditis elegans</name>
    <dbReference type="NCBI Taxonomy" id="6239"/>
    <lineage>
        <taxon>Eukaryota</taxon>
        <taxon>Metazoa</taxon>
        <taxon>Ecdysozoa</taxon>
        <taxon>Nematoda</taxon>
        <taxon>Chromadorea</taxon>
        <taxon>Rhabditida</taxon>
        <taxon>Rhabditina</taxon>
        <taxon>Rhabditomorpha</taxon>
        <taxon>Rhabditoidea</taxon>
        <taxon>Rhabditidae</taxon>
        <taxon>Peloderinae</taxon>
        <taxon>Caenorhabditis</taxon>
    </lineage>
</organism>
<keyword id="KW-0067">ATP-binding</keyword>
<keyword id="KW-0347">Helicase</keyword>
<keyword id="KW-0378">Hydrolase</keyword>
<keyword id="KW-0479">Metal-binding</keyword>
<keyword id="KW-0547">Nucleotide-binding</keyword>
<keyword id="KW-1185">Reference proteome</keyword>
<keyword id="KW-0677">Repeat</keyword>
<keyword id="KW-0694">RNA-binding</keyword>
<keyword id="KW-0862">Zinc</keyword>
<keyword id="KW-0863">Zinc-finger</keyword>
<accession>O76743</accession>
<accession>O44758</accession>
<feature type="chain" id="PRO_0000055092" description="ATP-dependent RNA helicase glh-4">
    <location>
        <begin position="1"/>
        <end position="1156"/>
    </location>
</feature>
<feature type="domain" description="Helicase ATP-binding" evidence="2">
    <location>
        <begin position="767"/>
        <end position="951"/>
    </location>
</feature>
<feature type="domain" description="Helicase C-terminal" evidence="3">
    <location>
        <begin position="986"/>
        <end position="1139"/>
    </location>
</feature>
<feature type="zinc finger region" description="CCHC-type 1" evidence="1">
    <location>
        <begin position="570"/>
        <end position="587"/>
    </location>
</feature>
<feature type="zinc finger region" description="CCHC-type 2" evidence="1">
    <location>
        <begin position="593"/>
        <end position="610"/>
    </location>
</feature>
<feature type="zinc finger region" description="CCHC-type 3" evidence="1">
    <location>
        <begin position="616"/>
        <end position="633"/>
    </location>
</feature>
<feature type="zinc finger region" description="CCHC-type 4" evidence="1">
    <location>
        <begin position="639"/>
        <end position="656"/>
    </location>
</feature>
<feature type="zinc finger region" description="CCHC-type 5" evidence="1">
    <location>
        <begin position="665"/>
        <end position="682"/>
    </location>
</feature>
<feature type="region of interest" description="Disordered" evidence="4">
    <location>
        <begin position="1"/>
        <end position="81"/>
    </location>
</feature>
<feature type="region of interest" description="Disordered" evidence="4">
    <location>
        <begin position="194"/>
        <end position="213"/>
    </location>
</feature>
<feature type="region of interest" description="Disordered" evidence="4">
    <location>
        <begin position="231"/>
        <end position="423"/>
    </location>
</feature>
<feature type="region of interest" description="Disordered" evidence="4">
    <location>
        <begin position="436"/>
        <end position="522"/>
    </location>
</feature>
<feature type="region of interest" description="Disordered" evidence="4">
    <location>
        <begin position="1135"/>
        <end position="1156"/>
    </location>
</feature>
<feature type="short sequence motif" description="Q motif">
    <location>
        <begin position="736"/>
        <end position="764"/>
    </location>
</feature>
<feature type="short sequence motif" description="DEAD box">
    <location>
        <begin position="897"/>
        <end position="900"/>
    </location>
</feature>
<feature type="compositionally biased region" description="Basic and acidic residues" evidence="4">
    <location>
        <begin position="12"/>
        <end position="22"/>
    </location>
</feature>
<feature type="compositionally biased region" description="Pro residues" evidence="4">
    <location>
        <begin position="24"/>
        <end position="34"/>
    </location>
</feature>
<feature type="compositionally biased region" description="Polar residues" evidence="4">
    <location>
        <begin position="60"/>
        <end position="73"/>
    </location>
</feature>
<feature type="compositionally biased region" description="Polar residues" evidence="4">
    <location>
        <begin position="194"/>
        <end position="211"/>
    </location>
</feature>
<feature type="compositionally biased region" description="Polar residues" evidence="4">
    <location>
        <begin position="243"/>
        <end position="258"/>
    </location>
</feature>
<feature type="compositionally biased region" description="Gly residues" evidence="4">
    <location>
        <begin position="259"/>
        <end position="281"/>
    </location>
</feature>
<feature type="compositionally biased region" description="Polar residues" evidence="4">
    <location>
        <begin position="307"/>
        <end position="319"/>
    </location>
</feature>
<feature type="compositionally biased region" description="Gly residues" evidence="4">
    <location>
        <begin position="321"/>
        <end position="332"/>
    </location>
</feature>
<feature type="compositionally biased region" description="Gly residues" evidence="4">
    <location>
        <begin position="342"/>
        <end position="358"/>
    </location>
</feature>
<feature type="compositionally biased region" description="Polar residues" evidence="4">
    <location>
        <begin position="362"/>
        <end position="371"/>
    </location>
</feature>
<feature type="compositionally biased region" description="Polar residues" evidence="4">
    <location>
        <begin position="395"/>
        <end position="406"/>
    </location>
</feature>
<feature type="compositionally biased region" description="Gly residues" evidence="4">
    <location>
        <begin position="408"/>
        <end position="423"/>
    </location>
</feature>
<feature type="compositionally biased region" description="Polar residues" evidence="4">
    <location>
        <begin position="440"/>
        <end position="451"/>
    </location>
</feature>
<feature type="compositionally biased region" description="Polar residues" evidence="4">
    <location>
        <begin position="464"/>
        <end position="476"/>
    </location>
</feature>
<feature type="compositionally biased region" description="Gly residues" evidence="4">
    <location>
        <begin position="478"/>
        <end position="489"/>
    </location>
</feature>
<feature type="compositionally biased region" description="Acidic residues" evidence="4">
    <location>
        <begin position="1145"/>
        <end position="1156"/>
    </location>
</feature>
<feature type="binding site" evidence="2">
    <location>
        <begin position="780"/>
        <end position="787"/>
    </location>
    <ligand>
        <name>ATP</name>
        <dbReference type="ChEBI" id="CHEBI:30616"/>
    </ligand>
</feature>
<feature type="sequence conflict" description="In Ref. 1; AAC28387." evidence="9" ref="1">
    <original>L</original>
    <variation>P</variation>
    <location>
        <position position="136"/>
    </location>
</feature>
<evidence type="ECO:0000255" key="1">
    <source>
        <dbReference type="PROSITE-ProRule" id="PRU00047"/>
    </source>
</evidence>
<evidence type="ECO:0000255" key="2">
    <source>
        <dbReference type="PROSITE-ProRule" id="PRU00541"/>
    </source>
</evidence>
<evidence type="ECO:0000255" key="3">
    <source>
        <dbReference type="PROSITE-ProRule" id="PRU00542"/>
    </source>
</evidence>
<evidence type="ECO:0000256" key="4">
    <source>
        <dbReference type="SAM" id="MobiDB-lite"/>
    </source>
</evidence>
<evidence type="ECO:0000269" key="5">
    <source>
    </source>
</evidence>
<evidence type="ECO:0000269" key="6">
    <source>
    </source>
</evidence>
<evidence type="ECO:0000269" key="7">
    <source>
    </source>
</evidence>
<evidence type="ECO:0000269" key="8">
    <source>
    </source>
</evidence>
<evidence type="ECO:0000305" key="9"/>
<evidence type="ECO:0000312" key="10">
    <source>
        <dbReference type="WormBase" id="T12F5.3"/>
    </source>
</evidence>
<protein>
    <recommendedName>
        <fullName>ATP-dependent RNA helicase glh-4</fullName>
        <ecNumber>3.6.4.13</ecNumber>
    </recommendedName>
    <alternativeName>
        <fullName>Germline helicase 4</fullName>
    </alternativeName>
</protein>
<sequence>MSFSDDGWGAEAEVKVAEDVPEKNVPPPVEPPRAPQSTAIKTEPERNSDEPSAGFGIDPITTSKTFGSQTTPKTEFGGAPSLSGFGGNAAAAAANKTSFDQQGNGFGGAAKHGFGGVGGAPSSFGANVIPVNKPSLGHKTTGFGGEPKHVSGGAFSSANNFDQQDKGFGGAASSGFGNGSMLTNQKVGLENQTTGVGASEVPTSKPSSFGQQPAVVSGFGGAAKMGFGGSSSSGFGGQKAGATESSGFPTKETSTSQPGFGGDSSTGFGSGLKAGFGGHGAGAAENSGLPTETTGFGGKLPSAGFGASSSNESAFGQQSKGFGGATKNGFGGDSSSSFGSGSKAGFGGTSSSGIGGQKPGATESSGFPTKETSTSGGTFGSGFGGKPTSTGFGAPSTTDSSSGQQTAGFGGASKPGFGGDSSTGFGSGLKAGFGGHRASTAENSGLPTETTGFGGKLPPAGFGASSSNESAFGQQSKGFGGATKNGFGGDSSNSFGKRDSGFGGPQDQGFGDTDAPSKSGLGSFNTGGGAVKSAFGAAGFGSSSNFGNGNTFGEPSDNQRGNWDGGERPRGCHNCGEEGHISKECDKPKVPRFPCRNCEQLGHFASDCDQPRVPRGPCRNCGIEGHFAVDCDQPKVPRGPCRNCGQEGHFAKDCQNERVRMEPTEPCRRCAEEGHWGYECPTRPKDLQGNFLESYDFVFTPDDKMFEDAVNNDDKIDFDQKVVASTGKVEIPDMASFDGFKILPQDLHDNLKRMKMNRPTPIQRASFFPIMHGNDVVACAHTGSGKTLAFLIPFVIKLMEEFEKDRDVTDEKPSPRLLIVAPTRELVNQTFTTARQLTYETGLKCGLAFGGYSRNANVQHLRSFSQLNILVATMGRLQDFVNAGEVSLSKMKYIVLDEADRMVDSNDFGEEVSKIIGSPGERTQQTVLFSASFSEDLQSDDLPKFVKEGYTMLQVDKFGTANEKIDQKILPVPRTEKRDAIYKLLGIDENTVTLLPDAPIEKQKTLIFVNSVKFCDTLAALISSAGVSTISMHSYQNQEQRDRTLDDFRRGKYQCMVASNVCARGLNIAGLDHVVNYDMPDKNGFDEYVNRIGRTGRAGFTGTSTAFVDVENDTDIIPCLVSILNEAKKEVPEWLTEGAGHQEEGGDDWNEQEQEW</sequence>
<gene>
    <name evidence="10" type="primary">glh-4</name>
    <name evidence="10" type="ORF">T12F5.3</name>
</gene>
<proteinExistence type="evidence at protein level"/>
<comment type="function">
    <text evidence="6 7 8 9">Probable ATP-binding RNA helicase. May act redundantly with the P-granule component glh-1 to regulate the formation of the granular structure of P-granules in embryos (PubMed:21402787, PubMed:24746798). May protect somatic cells from excessive apoptosis during normal development (PubMed:27650246).</text>
</comment>
<comment type="catalytic activity">
    <reaction>
        <text>ATP + H2O = ADP + phosphate + H(+)</text>
        <dbReference type="Rhea" id="RHEA:13065"/>
        <dbReference type="ChEBI" id="CHEBI:15377"/>
        <dbReference type="ChEBI" id="CHEBI:15378"/>
        <dbReference type="ChEBI" id="CHEBI:30616"/>
        <dbReference type="ChEBI" id="CHEBI:43474"/>
        <dbReference type="ChEBI" id="CHEBI:456216"/>
        <dbReference type="EC" id="3.6.4.13"/>
    </reaction>
</comment>
<comment type="subunit">
    <text evidence="5">Interacts (via C-terminus) with kgb-1.</text>
</comment>
<comment type="developmental stage">
    <text>During germline proliferation.</text>
</comment>
<comment type="disruption phenotype">
    <text evidence="6 7 8">Knockout with RNAi-mediated knockdown of glh-1 results in smaller P-granules and irregular cytoplasmic localization of the P-granule component pgl-3 in embryos (PubMed:21402787). Quadruple RNAi-mediated knockdown with glh-1, pgl-1 and pgl-3 results in offspring that display 27-89% sterility, abnormal oocytes and do not have embryos in the uterus (PubMed:24746798). These sterile offspring still produce sperm (PubMed:24746798). Furthermore, these offspring may have compromised P-granule integrity as there is diffuse cytoplasmic localization of the P-granule component deps-1, which may cause germ cells to initiate somatic reprogramming (PubMed:24746798). RNAi-mediated knockdown in a double ced-1 and hpl-2 mutant background rescues the reduced somatic cell apoptotic cell defect in the ced-1 and hpl-2 double knockout (PubMed:27650246).</text>
</comment>
<comment type="similarity">
    <text evidence="9">Belongs to the DEAD box helicase family. DDX4/VASA subfamily.</text>
</comment>
<name>GLH4_CAEEL</name>
<dbReference type="EC" id="3.6.4.13"/>
<dbReference type="EMBL" id="AF079508">
    <property type="protein sequence ID" value="AAC28387.1"/>
    <property type="molecule type" value="mRNA"/>
</dbReference>
<dbReference type="EMBL" id="FO081191">
    <property type="protein sequence ID" value="CCD69784.1"/>
    <property type="molecule type" value="Genomic_DNA"/>
</dbReference>
<dbReference type="PIR" id="T32759">
    <property type="entry name" value="T32759"/>
</dbReference>
<dbReference type="PIR" id="T43326">
    <property type="entry name" value="T43326"/>
</dbReference>
<dbReference type="RefSeq" id="NP_491207.3">
    <property type="nucleotide sequence ID" value="NM_058806.4"/>
</dbReference>
<dbReference type="SMR" id="O76743"/>
<dbReference type="BioGRID" id="37415">
    <property type="interactions" value="2"/>
</dbReference>
<dbReference type="FunCoup" id="O76743">
    <property type="interactions" value="774"/>
</dbReference>
<dbReference type="IntAct" id="O76743">
    <property type="interactions" value="1"/>
</dbReference>
<dbReference type="STRING" id="6239.T12F5.3.1"/>
<dbReference type="iPTMnet" id="O76743"/>
<dbReference type="PaxDb" id="6239-T12F5.3.1"/>
<dbReference type="PeptideAtlas" id="O76743"/>
<dbReference type="EnsemblMetazoa" id="T12F5.3.1">
    <property type="protein sequence ID" value="T12F5.3.1"/>
    <property type="gene ID" value="WBGene00001601"/>
</dbReference>
<dbReference type="GeneID" id="171941"/>
<dbReference type="KEGG" id="cel:CELE_T12F5.3"/>
<dbReference type="UCSC" id="T12F5.3.1">
    <property type="organism name" value="c. elegans"/>
</dbReference>
<dbReference type="AGR" id="WB:WBGene00001601"/>
<dbReference type="CTD" id="171941"/>
<dbReference type="WormBase" id="T12F5.3">
    <property type="protein sequence ID" value="CE29052"/>
    <property type="gene ID" value="WBGene00001601"/>
    <property type="gene designation" value="glh-4"/>
</dbReference>
<dbReference type="eggNOG" id="KOG0335">
    <property type="taxonomic scope" value="Eukaryota"/>
</dbReference>
<dbReference type="HOGENOM" id="CLU_008559_0_0_1"/>
<dbReference type="InParanoid" id="O76743"/>
<dbReference type="OMA" id="HEEWARH"/>
<dbReference type="OrthoDB" id="5868662at2759"/>
<dbReference type="SignaLink" id="O76743"/>
<dbReference type="PRO" id="PR:O76743"/>
<dbReference type="Proteomes" id="UP000001940">
    <property type="component" value="Chromosome I"/>
</dbReference>
<dbReference type="Bgee" id="WBGene00001601">
    <property type="expression patterns" value="Expressed in adult organism and 2 other cell types or tissues"/>
</dbReference>
<dbReference type="GO" id="GO:0005737">
    <property type="term" value="C:cytoplasm"/>
    <property type="evidence" value="ECO:0000314"/>
    <property type="project" value="WormBase"/>
</dbReference>
<dbReference type="GO" id="GO:0043186">
    <property type="term" value="C:P granule"/>
    <property type="evidence" value="ECO:0000314"/>
    <property type="project" value="WormBase"/>
</dbReference>
<dbReference type="GO" id="GO:0005524">
    <property type="term" value="F:ATP binding"/>
    <property type="evidence" value="ECO:0007669"/>
    <property type="project" value="UniProtKB-KW"/>
</dbReference>
<dbReference type="GO" id="GO:0016887">
    <property type="term" value="F:ATP hydrolysis activity"/>
    <property type="evidence" value="ECO:0007669"/>
    <property type="project" value="RHEA"/>
</dbReference>
<dbReference type="GO" id="GO:0008432">
    <property type="term" value="F:JUN kinase binding"/>
    <property type="evidence" value="ECO:0000353"/>
    <property type="project" value="WormBase"/>
</dbReference>
<dbReference type="GO" id="GO:0003723">
    <property type="term" value="F:RNA binding"/>
    <property type="evidence" value="ECO:0007669"/>
    <property type="project" value="UniProtKB-KW"/>
</dbReference>
<dbReference type="GO" id="GO:0003724">
    <property type="term" value="F:RNA helicase activity"/>
    <property type="evidence" value="ECO:0000250"/>
    <property type="project" value="WormBase"/>
</dbReference>
<dbReference type="GO" id="GO:0008270">
    <property type="term" value="F:zinc ion binding"/>
    <property type="evidence" value="ECO:0007669"/>
    <property type="project" value="UniProtKB-KW"/>
</dbReference>
<dbReference type="GO" id="GO:0007276">
    <property type="term" value="P:gamete generation"/>
    <property type="evidence" value="ECO:0000315"/>
    <property type="project" value="WormBase"/>
</dbReference>
<dbReference type="GO" id="GO:0030490">
    <property type="term" value="P:maturation of SSU-rRNA"/>
    <property type="evidence" value="ECO:0000318"/>
    <property type="project" value="GO_Central"/>
</dbReference>
<dbReference type="GO" id="GO:0042127">
    <property type="term" value="P:regulation of cell population proliferation"/>
    <property type="evidence" value="ECO:0000315"/>
    <property type="project" value="WormBase"/>
</dbReference>
<dbReference type="CDD" id="cd18787">
    <property type="entry name" value="SF2_C_DEAD"/>
    <property type="match status" value="1"/>
</dbReference>
<dbReference type="FunFam" id="3.40.50.300:FF:000657">
    <property type="entry name" value="Probable ATP-dependent RNA helicase DDX41"/>
    <property type="match status" value="1"/>
</dbReference>
<dbReference type="Gene3D" id="3.40.50.300">
    <property type="entry name" value="P-loop containing nucleotide triphosphate hydrolases"/>
    <property type="match status" value="2"/>
</dbReference>
<dbReference type="Gene3D" id="4.10.60.10">
    <property type="entry name" value="Zinc finger, CCHC-type"/>
    <property type="match status" value="3"/>
</dbReference>
<dbReference type="InterPro" id="IPR011545">
    <property type="entry name" value="DEAD/DEAH_box_helicase_dom"/>
</dbReference>
<dbReference type="InterPro" id="IPR014001">
    <property type="entry name" value="Helicase_ATP-bd"/>
</dbReference>
<dbReference type="InterPro" id="IPR001650">
    <property type="entry name" value="Helicase_C-like"/>
</dbReference>
<dbReference type="InterPro" id="IPR027417">
    <property type="entry name" value="P-loop_NTPase"/>
</dbReference>
<dbReference type="InterPro" id="IPR000629">
    <property type="entry name" value="RNA-helicase_DEAD-box_CS"/>
</dbReference>
<dbReference type="InterPro" id="IPR001878">
    <property type="entry name" value="Znf_CCHC"/>
</dbReference>
<dbReference type="InterPro" id="IPR036875">
    <property type="entry name" value="Znf_CCHC_sf"/>
</dbReference>
<dbReference type="PANTHER" id="PTHR47958">
    <property type="entry name" value="ATP-DEPENDENT RNA HELICASE DBP3"/>
    <property type="match status" value="1"/>
</dbReference>
<dbReference type="Pfam" id="PF00270">
    <property type="entry name" value="DEAD"/>
    <property type="match status" value="1"/>
</dbReference>
<dbReference type="Pfam" id="PF00271">
    <property type="entry name" value="Helicase_C"/>
    <property type="match status" value="1"/>
</dbReference>
<dbReference type="Pfam" id="PF00098">
    <property type="entry name" value="zf-CCHC"/>
    <property type="match status" value="5"/>
</dbReference>
<dbReference type="SMART" id="SM00487">
    <property type="entry name" value="DEXDc"/>
    <property type="match status" value="1"/>
</dbReference>
<dbReference type="SMART" id="SM00490">
    <property type="entry name" value="HELICc"/>
    <property type="match status" value="1"/>
</dbReference>
<dbReference type="SMART" id="SM00343">
    <property type="entry name" value="ZnF_C2HC"/>
    <property type="match status" value="5"/>
</dbReference>
<dbReference type="SUPFAM" id="SSF52540">
    <property type="entry name" value="P-loop containing nucleoside triphosphate hydrolases"/>
    <property type="match status" value="1"/>
</dbReference>
<dbReference type="SUPFAM" id="SSF57756">
    <property type="entry name" value="Retrovirus zinc finger-like domains"/>
    <property type="match status" value="2"/>
</dbReference>
<dbReference type="PROSITE" id="PS00039">
    <property type="entry name" value="DEAD_ATP_HELICASE"/>
    <property type="match status" value="1"/>
</dbReference>
<dbReference type="PROSITE" id="PS51192">
    <property type="entry name" value="HELICASE_ATP_BIND_1"/>
    <property type="match status" value="1"/>
</dbReference>
<dbReference type="PROSITE" id="PS51194">
    <property type="entry name" value="HELICASE_CTER"/>
    <property type="match status" value="1"/>
</dbReference>
<dbReference type="PROSITE" id="PS51195">
    <property type="entry name" value="Q_MOTIF"/>
    <property type="match status" value="1"/>
</dbReference>
<dbReference type="PROSITE" id="PS50158">
    <property type="entry name" value="ZF_CCHC"/>
    <property type="match status" value="5"/>
</dbReference>